<organism>
    <name type="scientific">Yersinia pseudotuberculosis serotype O:3 (strain YPIII)</name>
    <dbReference type="NCBI Taxonomy" id="502800"/>
    <lineage>
        <taxon>Bacteria</taxon>
        <taxon>Pseudomonadati</taxon>
        <taxon>Pseudomonadota</taxon>
        <taxon>Gammaproteobacteria</taxon>
        <taxon>Enterobacterales</taxon>
        <taxon>Yersiniaceae</taxon>
        <taxon>Yersinia</taxon>
    </lineage>
</organism>
<evidence type="ECO:0000255" key="1"/>
<evidence type="ECO:0000255" key="2">
    <source>
        <dbReference type="HAMAP-Rule" id="MF_01260"/>
    </source>
</evidence>
<name>BIOH_YERPY</name>
<keyword id="KW-0093">Biotin biosynthesis</keyword>
<keyword id="KW-0963">Cytoplasm</keyword>
<keyword id="KW-0378">Hydrolase</keyword>
<keyword id="KW-0719">Serine esterase</keyword>
<proteinExistence type="inferred from homology"/>
<reference key="1">
    <citation type="submission" date="2008-02" db="EMBL/GenBank/DDBJ databases">
        <title>Complete sequence of Yersinia pseudotuberculosis YPIII.</title>
        <authorList>
            <consortium name="US DOE Joint Genome Institute"/>
            <person name="Copeland A."/>
            <person name="Lucas S."/>
            <person name="Lapidus A."/>
            <person name="Glavina del Rio T."/>
            <person name="Dalin E."/>
            <person name="Tice H."/>
            <person name="Bruce D."/>
            <person name="Goodwin L."/>
            <person name="Pitluck S."/>
            <person name="Munk A.C."/>
            <person name="Brettin T."/>
            <person name="Detter J.C."/>
            <person name="Han C."/>
            <person name="Tapia R."/>
            <person name="Schmutz J."/>
            <person name="Larimer F."/>
            <person name="Land M."/>
            <person name="Hauser L."/>
            <person name="Challacombe J.F."/>
            <person name="Green L."/>
            <person name="Lindler L.E."/>
            <person name="Nikolich M.P."/>
            <person name="Richardson P."/>
        </authorList>
    </citation>
    <scope>NUCLEOTIDE SEQUENCE [LARGE SCALE GENOMIC DNA]</scope>
    <source>
        <strain>YPIII</strain>
    </source>
</reference>
<dbReference type="EC" id="3.1.1.85" evidence="2"/>
<dbReference type="EMBL" id="CP000950">
    <property type="protein sequence ID" value="ACA66478.1"/>
    <property type="molecule type" value="Genomic_DNA"/>
</dbReference>
<dbReference type="RefSeq" id="WP_002208922.1">
    <property type="nucleotide sequence ID" value="NZ_CP009792.1"/>
</dbReference>
<dbReference type="SMR" id="B1JHZ5"/>
<dbReference type="ESTHER" id="yerpe-BIOH">
    <property type="family name" value="BioH"/>
</dbReference>
<dbReference type="GeneID" id="57974471"/>
<dbReference type="KEGG" id="ypy:YPK_0165"/>
<dbReference type="PATRIC" id="fig|502800.11.peg.772"/>
<dbReference type="UniPathway" id="UPA00078"/>
<dbReference type="GO" id="GO:0005737">
    <property type="term" value="C:cytoplasm"/>
    <property type="evidence" value="ECO:0007669"/>
    <property type="project" value="UniProtKB-SubCell"/>
</dbReference>
<dbReference type="GO" id="GO:0090499">
    <property type="term" value="F:pimelyl-[acyl-carrier protein] methyl ester esterase activity"/>
    <property type="evidence" value="ECO:0007669"/>
    <property type="project" value="UniProtKB-EC"/>
</dbReference>
<dbReference type="GO" id="GO:0009102">
    <property type="term" value="P:biotin biosynthetic process"/>
    <property type="evidence" value="ECO:0007669"/>
    <property type="project" value="UniProtKB-UniRule"/>
</dbReference>
<dbReference type="Gene3D" id="3.40.50.1820">
    <property type="entry name" value="alpha/beta hydrolase"/>
    <property type="match status" value="1"/>
</dbReference>
<dbReference type="HAMAP" id="MF_01260">
    <property type="entry name" value="Carboxylester"/>
    <property type="match status" value="1"/>
</dbReference>
<dbReference type="InterPro" id="IPR000073">
    <property type="entry name" value="AB_hydrolase_1"/>
</dbReference>
<dbReference type="InterPro" id="IPR029058">
    <property type="entry name" value="AB_hydrolase_fold"/>
</dbReference>
<dbReference type="InterPro" id="IPR010076">
    <property type="entry name" value="BioH"/>
</dbReference>
<dbReference type="InterPro" id="IPR050228">
    <property type="entry name" value="Carboxylesterase_BioH"/>
</dbReference>
<dbReference type="NCBIfam" id="TIGR01738">
    <property type="entry name" value="bioH"/>
    <property type="match status" value="1"/>
</dbReference>
<dbReference type="PANTHER" id="PTHR43194">
    <property type="entry name" value="HYDROLASE ALPHA/BETA FOLD FAMILY"/>
    <property type="match status" value="1"/>
</dbReference>
<dbReference type="PANTHER" id="PTHR43194:SF5">
    <property type="entry name" value="PIMELOYL-[ACYL-CARRIER PROTEIN] METHYL ESTER ESTERASE"/>
    <property type="match status" value="1"/>
</dbReference>
<dbReference type="Pfam" id="PF00561">
    <property type="entry name" value="Abhydrolase_1"/>
    <property type="match status" value="1"/>
</dbReference>
<dbReference type="SUPFAM" id="SSF53474">
    <property type="entry name" value="alpha/beta-Hydrolases"/>
    <property type="match status" value="1"/>
</dbReference>
<comment type="function">
    <text evidence="2">The physiological role of BioH is to remove the methyl group introduced by BioC when the pimeloyl moiety is complete. It allows to synthesize pimeloyl-ACP via the fatty acid synthetic pathway through the hydrolysis of the ester bonds of pimeloyl-ACP esters.</text>
</comment>
<comment type="catalytic activity">
    <reaction evidence="2">
        <text>6-carboxyhexanoyl-[ACP] methyl ester + H2O = 6-carboxyhexanoyl-[ACP] + methanol + H(+)</text>
        <dbReference type="Rhea" id="RHEA:42700"/>
        <dbReference type="Rhea" id="RHEA-COMP:9955"/>
        <dbReference type="Rhea" id="RHEA-COMP:10186"/>
        <dbReference type="ChEBI" id="CHEBI:15377"/>
        <dbReference type="ChEBI" id="CHEBI:15378"/>
        <dbReference type="ChEBI" id="CHEBI:17790"/>
        <dbReference type="ChEBI" id="CHEBI:78846"/>
        <dbReference type="ChEBI" id="CHEBI:82735"/>
        <dbReference type="EC" id="3.1.1.85"/>
    </reaction>
</comment>
<comment type="pathway">
    <text evidence="2">Cofactor biosynthesis; biotin biosynthesis.</text>
</comment>
<comment type="subunit">
    <text evidence="2">Monomer.</text>
</comment>
<comment type="subcellular location">
    <subcellularLocation>
        <location evidence="2">Cytoplasm</location>
    </subcellularLocation>
</comment>
<comment type="similarity">
    <text evidence="2">Belongs to the AB hydrolase superfamily. Carboxylesterase BioH family.</text>
</comment>
<gene>
    <name evidence="2" type="primary">bioH</name>
    <name type="ordered locus">YPK_0165</name>
</gene>
<protein>
    <recommendedName>
        <fullName evidence="2">Pimeloyl-[acyl-carrier protein] methyl ester esterase</fullName>
        <ecNumber evidence="2">3.1.1.85</ecNumber>
    </recommendedName>
    <alternativeName>
        <fullName evidence="2">Biotin synthesis protein BioH</fullName>
    </alternativeName>
    <alternativeName>
        <fullName evidence="2">Carboxylesterase BioH</fullName>
    </alternativeName>
</protein>
<sequence length="258" mass="28590">MKQLYWYTCGEGDCDLVLLHGWGLNSGVWHCIIDRLAPHFRLHLVDLPGYGRSQDYGAMSLADMAERVAQQAPKQALWLGWSMGGLVASQIALSQPECVRGLITVSSSPCFTARDEWPGIKPEVLAGFQHQLSDDFHRTVERFLALQTLGTESSRQDARLLKSVVLQHQMPDVEVLTGGLAILRTADLRTALAGFTLPFMRVYGHLDSLVPRKVASLLDSAWPQTQSVVMQGAAHAPFISHPNDFAKLILNFAEENKK</sequence>
<feature type="chain" id="PRO_1000140014" description="Pimeloyl-[acyl-carrier protein] methyl ester esterase">
    <location>
        <begin position="1"/>
        <end position="258"/>
    </location>
</feature>
<feature type="domain" description="AB hydrolase-1" evidence="1">
    <location>
        <begin position="16"/>
        <end position="242"/>
    </location>
</feature>
<feature type="active site" description="Nucleophile" evidence="2">
    <location>
        <position position="82"/>
    </location>
</feature>
<feature type="active site" evidence="2">
    <location>
        <position position="207"/>
    </location>
</feature>
<feature type="active site" evidence="2">
    <location>
        <position position="235"/>
    </location>
</feature>
<feature type="binding site" evidence="2">
    <location>
        <position position="22"/>
    </location>
    <ligand>
        <name>substrate</name>
    </ligand>
</feature>
<feature type="binding site" evidence="2">
    <location>
        <begin position="82"/>
        <end position="83"/>
    </location>
    <ligand>
        <name>substrate</name>
    </ligand>
</feature>
<feature type="binding site" evidence="2">
    <location>
        <begin position="143"/>
        <end position="147"/>
    </location>
    <ligand>
        <name>substrate</name>
    </ligand>
</feature>
<feature type="binding site" evidence="2">
    <location>
        <position position="235"/>
    </location>
    <ligand>
        <name>substrate</name>
    </ligand>
</feature>
<accession>B1JHZ5</accession>